<keyword id="KW-1185">Reference proteome</keyword>
<keyword id="KW-0694">RNA-binding</keyword>
<keyword id="KW-0804">Transcription</keyword>
<keyword id="KW-0889">Transcription antitermination</keyword>
<keyword id="KW-0805">Transcription regulation</keyword>
<protein>
    <recommendedName>
        <fullName evidence="1">Transcription antitermination protein NusB</fullName>
    </recommendedName>
    <alternativeName>
        <fullName evidence="1">Antitermination factor NusB</fullName>
    </alternativeName>
</protein>
<accession>A3QC63</accession>
<organism>
    <name type="scientific">Shewanella loihica (strain ATCC BAA-1088 / PV-4)</name>
    <dbReference type="NCBI Taxonomy" id="323850"/>
    <lineage>
        <taxon>Bacteria</taxon>
        <taxon>Pseudomonadati</taxon>
        <taxon>Pseudomonadota</taxon>
        <taxon>Gammaproteobacteria</taxon>
        <taxon>Alteromonadales</taxon>
        <taxon>Shewanellaceae</taxon>
        <taxon>Shewanella</taxon>
    </lineage>
</organism>
<evidence type="ECO:0000255" key="1">
    <source>
        <dbReference type="HAMAP-Rule" id="MF_00073"/>
    </source>
</evidence>
<sequence>MKPSERRKARRLAVQAIYSWQLSGNNVADVEHEFLTEQKIDGVDVSYFRELLSGTTTKSAQLDELIMPHLERPFDEVSPIEKAVLRIATYELTFRKDVPYKVAINEAIELAKAFGAEDGHKFVNGILDKIVAKK</sequence>
<gene>
    <name evidence="1" type="primary">nusB</name>
    <name type="ordered locus">Shew_1191</name>
</gene>
<dbReference type="EMBL" id="CP000606">
    <property type="protein sequence ID" value="ABO23061.1"/>
    <property type="molecule type" value="Genomic_DNA"/>
</dbReference>
<dbReference type="RefSeq" id="WP_011864993.1">
    <property type="nucleotide sequence ID" value="NC_009092.1"/>
</dbReference>
<dbReference type="SMR" id="A3QC63"/>
<dbReference type="STRING" id="323850.Shew_1191"/>
<dbReference type="KEGG" id="slo:Shew_1191"/>
<dbReference type="eggNOG" id="COG0781">
    <property type="taxonomic scope" value="Bacteria"/>
</dbReference>
<dbReference type="HOGENOM" id="CLU_087843_4_1_6"/>
<dbReference type="OrthoDB" id="9789556at2"/>
<dbReference type="Proteomes" id="UP000001558">
    <property type="component" value="Chromosome"/>
</dbReference>
<dbReference type="GO" id="GO:0005829">
    <property type="term" value="C:cytosol"/>
    <property type="evidence" value="ECO:0007669"/>
    <property type="project" value="TreeGrafter"/>
</dbReference>
<dbReference type="GO" id="GO:0003723">
    <property type="term" value="F:RNA binding"/>
    <property type="evidence" value="ECO:0007669"/>
    <property type="project" value="UniProtKB-UniRule"/>
</dbReference>
<dbReference type="GO" id="GO:0006353">
    <property type="term" value="P:DNA-templated transcription termination"/>
    <property type="evidence" value="ECO:0007669"/>
    <property type="project" value="UniProtKB-UniRule"/>
</dbReference>
<dbReference type="GO" id="GO:0031564">
    <property type="term" value="P:transcription antitermination"/>
    <property type="evidence" value="ECO:0007669"/>
    <property type="project" value="UniProtKB-KW"/>
</dbReference>
<dbReference type="CDD" id="cd00619">
    <property type="entry name" value="Terminator_NusB"/>
    <property type="match status" value="1"/>
</dbReference>
<dbReference type="FunFam" id="1.10.940.10:FF:000001">
    <property type="entry name" value="Transcription antitermination factor NusB"/>
    <property type="match status" value="1"/>
</dbReference>
<dbReference type="Gene3D" id="1.10.940.10">
    <property type="entry name" value="NusB-like"/>
    <property type="match status" value="1"/>
</dbReference>
<dbReference type="HAMAP" id="MF_00073">
    <property type="entry name" value="NusB"/>
    <property type="match status" value="1"/>
</dbReference>
<dbReference type="InterPro" id="IPR035926">
    <property type="entry name" value="NusB-like_sf"/>
</dbReference>
<dbReference type="InterPro" id="IPR011605">
    <property type="entry name" value="NusB_fam"/>
</dbReference>
<dbReference type="InterPro" id="IPR006027">
    <property type="entry name" value="NusB_RsmB_TIM44"/>
</dbReference>
<dbReference type="NCBIfam" id="TIGR01951">
    <property type="entry name" value="nusB"/>
    <property type="match status" value="1"/>
</dbReference>
<dbReference type="PANTHER" id="PTHR11078:SF3">
    <property type="entry name" value="ANTITERMINATION NUSB DOMAIN-CONTAINING PROTEIN"/>
    <property type="match status" value="1"/>
</dbReference>
<dbReference type="PANTHER" id="PTHR11078">
    <property type="entry name" value="N UTILIZATION SUBSTANCE PROTEIN B-RELATED"/>
    <property type="match status" value="1"/>
</dbReference>
<dbReference type="Pfam" id="PF01029">
    <property type="entry name" value="NusB"/>
    <property type="match status" value="1"/>
</dbReference>
<dbReference type="SUPFAM" id="SSF48013">
    <property type="entry name" value="NusB-like"/>
    <property type="match status" value="1"/>
</dbReference>
<comment type="function">
    <text evidence="1">Involved in transcription antitermination. Required for transcription of ribosomal RNA (rRNA) genes. Binds specifically to the boxA antiterminator sequence of the ribosomal RNA (rrn) operons.</text>
</comment>
<comment type="similarity">
    <text evidence="1">Belongs to the NusB family.</text>
</comment>
<reference key="1">
    <citation type="submission" date="2007-03" db="EMBL/GenBank/DDBJ databases">
        <title>Complete sequence of Shewanella loihica PV-4.</title>
        <authorList>
            <consortium name="US DOE Joint Genome Institute"/>
            <person name="Copeland A."/>
            <person name="Lucas S."/>
            <person name="Lapidus A."/>
            <person name="Barry K."/>
            <person name="Detter J.C."/>
            <person name="Glavina del Rio T."/>
            <person name="Hammon N."/>
            <person name="Israni S."/>
            <person name="Dalin E."/>
            <person name="Tice H."/>
            <person name="Pitluck S."/>
            <person name="Chain P."/>
            <person name="Malfatti S."/>
            <person name="Shin M."/>
            <person name="Vergez L."/>
            <person name="Schmutz J."/>
            <person name="Larimer F."/>
            <person name="Land M."/>
            <person name="Hauser L."/>
            <person name="Kyrpides N."/>
            <person name="Mikhailova N."/>
            <person name="Romine M.F."/>
            <person name="Serres G."/>
            <person name="Fredrickson J."/>
            <person name="Tiedje J."/>
            <person name="Richardson P."/>
        </authorList>
    </citation>
    <scope>NUCLEOTIDE SEQUENCE [LARGE SCALE GENOMIC DNA]</scope>
    <source>
        <strain>ATCC BAA-1088 / PV-4</strain>
    </source>
</reference>
<feature type="chain" id="PRO_1000023772" description="Transcription antitermination protein NusB">
    <location>
        <begin position="1"/>
        <end position="134"/>
    </location>
</feature>
<name>NUSB_SHELP</name>
<proteinExistence type="inferred from homology"/>